<sequence>MYRSTKGASKARRDQINAEIRNLKELLPLAEADKVRLSYLHIMSLACIYTRKGVFFAGGTPLAGPTGLLSAQELEDIVAALPGFLLVFTAEGKLLYLSESVSEHLGHSMVDLVAQGDSIYDIIDPADHLTVRQQLTMPSALDADRLFRCRFNTSKSLRRQSAGNKLVLIRGRFHAHPPGAYWAGNPVFTAFCAPLEPRPRPGPGPGPGPGPASLFLAMFQSRHAKDLALLDISESVLIYLGFERSELLCKSWYGLLHPEDLAHASSQHYRLLAENGDIQAEMVVRLQAKHGGWTWIYCMLYSDGPEGPITANNYPISDTEAWSLRQQLNSENTQAAYVLGTPAVLPSFSENVFSQEHCSNPLFTPALGTPRSASFPRAPELGVISTSEELAQPSKELDFSYLPFPARPEPSLQADLSKDLVCTPPYTPHQPGGCAFLFSLHEPFQTHLPPPSSSLQEQLTPSTVTFSEQLTPSSATFPDPLTSSLQGQLTESSARSFEEQLTPCTSTFPDQLLPSTATFPEPLGSPTHEQLTPPSTAFQAHLNSPSQTFPEQLSPNPTKTYFAQEGCSFLYEKLPPSPSSPGNGDCTLLALAQLRGPLSVDVPLVPEGLLTPEASPVKQSFFHYTEKEQNEIDRLIQQISQLAQGMDRPFSAEAGTGGLEPLGGLEPLNPNLSLSGAGPPVLSLDLKPWKCQELDFLVDPDNLFLEETPVEDIFMDLSTPDPNGEWGSGDPEAEVPGGTLSPCNNLSPEDHSFLEDLATYETAFETGVSTFPYEGFADELHQLQSQVQDSFHEDGSGGEPTF</sequence>
<proteinExistence type="evidence at protein level"/>
<accession>Q8CJH6</accession>
<organism>
    <name type="scientific">Rattus norvegicus</name>
    <name type="common">Rat</name>
    <dbReference type="NCBI Taxonomy" id="10116"/>
    <lineage>
        <taxon>Eukaryota</taxon>
        <taxon>Metazoa</taxon>
        <taxon>Chordata</taxon>
        <taxon>Craniata</taxon>
        <taxon>Vertebrata</taxon>
        <taxon>Euteleostomi</taxon>
        <taxon>Mammalia</taxon>
        <taxon>Eutheria</taxon>
        <taxon>Euarchontoglires</taxon>
        <taxon>Glires</taxon>
        <taxon>Rodentia</taxon>
        <taxon>Myomorpha</taxon>
        <taxon>Muroidea</taxon>
        <taxon>Muridae</taxon>
        <taxon>Murinae</taxon>
        <taxon>Rattus</taxon>
    </lineage>
</organism>
<comment type="function">
    <text evidence="1 7">Transcription factor expressed in neurons of the brain that regulates the excitatory-inhibitory balance within neural circuits and is required for contextual memory in the hippocampus (By similarity). Plays a key role in the structural and functional plasticity of neurons (By similarity). Acts as an early-response transcription factor in both excitatory and inhibitory neurons, where it induces distinct but overlapping sets of late-response genes in these two types of neurons, allowing the synapses that form on inhibitory and excitatory neurons to be modified by neuronal activity in a manner specific to their function within a circuit, thereby facilitating appropriate circuit responses to sensory experience (By similarity). In excitatory neurons, activates transcription of BDNF, which in turn controls the number of GABA-releasing synapses that form on excitatory neurons, thereby promoting an increased number of inhibitory synapses on excitatory neurons (By similarity). In inhibitory neurons, regulates a distinct set of target genes that serve to increase excitatory input onto somatostatin neurons, probably resulting in enhanced feedback inhibition within cortical circuits (By similarity). The excitatory and inhibitory balance in neurons affects a number of processes, such as short-term and long-term memory, acquisition of experience, fear memory, response to stress and social behavior (PubMed:21887312). Acts as a regulator of dendritic spine development in olfactory bulb granule cells in a sensory-experience-dependent manner by regulating expression of MDM2 (By similarity). Efficient DNA binding requires dimerization with another bHLH protein, such as ARNT, ARNT2 or BMAL1 (By similarity). Can activate the CME (CNS midline enhancer) element (By similarity).</text>
</comment>
<comment type="subunit">
    <text evidence="1">Efficient DNA binding requires dimerization with another bHLH protein. Heterodimer; forms a heterodimer with ARNT, ARNT2 or BMAL1.</text>
</comment>
<comment type="subcellular location">
    <subcellularLocation>
        <location evidence="1 4">Nucleus</location>
    </subcellularLocation>
</comment>
<comment type="tissue specificity">
    <text evidence="6 7">Specifically expressed in neurons (PubMed:18815592). Expressed in the lateral nucleus of the amygdala (at protein level) (PubMed:21887312).</text>
</comment>
<comment type="induction">
    <text evidence="6 7">Expression is regulated by neuronal activity (PubMed:18815592). Induced in excitatory neurons specifically upon calcium influx (PubMed:18815592). Induced in the lateral nucleus of the amygdala in a learning-dependent manner (at protein level) (PubMed:21887312).</text>
</comment>
<comment type="PTM">
    <text evidence="1">Ubiquitinated, leading to degradation by the proteosome.</text>
</comment>
<name>NPAS4_RAT</name>
<protein>
    <recommendedName>
        <fullName evidence="9">Neuronal PAS domain-containing protein 4</fullName>
        <shortName evidence="9">Neuronal PAS4</shortName>
    </recommendedName>
    <alternativeName>
        <fullName evidence="8">HLH-PAS transcription factor NXF</fullName>
    </alternativeName>
</protein>
<keyword id="KW-0010">Activator</keyword>
<keyword id="KW-0175">Coiled coil</keyword>
<keyword id="KW-0221">Differentiation</keyword>
<keyword id="KW-0238">DNA-binding</keyword>
<keyword id="KW-0524">Neurogenesis</keyword>
<keyword id="KW-0539">Nucleus</keyword>
<keyword id="KW-1185">Reference proteome</keyword>
<keyword id="KW-0677">Repeat</keyword>
<keyword id="KW-0804">Transcription</keyword>
<keyword id="KW-0805">Transcription regulation</keyword>
<keyword id="KW-0832">Ubl conjugation</keyword>
<evidence type="ECO:0000250" key="1">
    <source>
        <dbReference type="UniProtKB" id="Q8BGD7"/>
    </source>
</evidence>
<evidence type="ECO:0000255" key="2"/>
<evidence type="ECO:0000255" key="3">
    <source>
        <dbReference type="PROSITE-ProRule" id="PRU00140"/>
    </source>
</evidence>
<evidence type="ECO:0000255" key="4">
    <source>
        <dbReference type="PROSITE-ProRule" id="PRU00981"/>
    </source>
</evidence>
<evidence type="ECO:0000256" key="5">
    <source>
        <dbReference type="SAM" id="MobiDB-lite"/>
    </source>
</evidence>
<evidence type="ECO:0000269" key="6">
    <source>
    </source>
</evidence>
<evidence type="ECO:0000269" key="7">
    <source>
    </source>
</evidence>
<evidence type="ECO:0000303" key="8">
    <source>
    </source>
</evidence>
<evidence type="ECO:0000305" key="9"/>
<evidence type="ECO:0000312" key="10">
    <source>
        <dbReference type="RGD" id="628866"/>
    </source>
</evidence>
<gene>
    <name evidence="10" type="primary">Npas4</name>
    <name evidence="8" type="synonym">Nxf</name>
</gene>
<reference key="1">
    <citation type="journal article" date="2004" name="Mol. Cell. Biol.">
        <title>Identification of a novel basic helix-loop-helix-PAS factor, NXF, reveals a Sim2 competitive, positive regulatory role in dendritic-cytoskeleton modulator drebrin gene expression.</title>
        <authorList>
            <person name="Ooe N."/>
            <person name="Saito K."/>
            <person name="Mikami N."/>
            <person name="Nakatuka I."/>
            <person name="Kaneko H."/>
        </authorList>
    </citation>
    <scope>NUCLEOTIDE SEQUENCE [MRNA]</scope>
    <source>
        <strain>Sprague-Dawley</strain>
        <tissue>Brain</tissue>
    </source>
</reference>
<reference key="2">
    <citation type="journal article" date="2008" name="Nature">
        <title>Activity-dependent regulation of inhibitory synapse development by Npas4.</title>
        <authorList>
            <person name="Lin Y."/>
            <person name="Bloodgood B.L."/>
            <person name="Hauser J.L."/>
            <person name="Lapan A.D."/>
            <person name="Koon A.C."/>
            <person name="Kim T.K."/>
            <person name="Hu L.S."/>
            <person name="Malik A.N."/>
            <person name="Greenberg M.E."/>
        </authorList>
    </citation>
    <scope>TISSUE SPECIFICITY</scope>
    <scope>INDUCTION</scope>
</reference>
<reference key="3">
    <citation type="journal article" date="2011" name="PLoS ONE">
        <title>The neuronal PAS domain protein 4 (Npas4) is required for new and reactivated fear memories.</title>
        <authorList>
            <person name="Ploski J.E."/>
            <person name="Monsey M.S."/>
            <person name="Nguyen T."/>
            <person name="DiLeone R.J."/>
            <person name="Schafe G.E."/>
        </authorList>
    </citation>
    <scope>FUNCTION</scope>
</reference>
<feature type="chain" id="PRO_0000248224" description="Neuronal PAS domain-containing protein 4">
    <location>
        <begin position="1"/>
        <end position="802"/>
    </location>
</feature>
<feature type="domain" description="bHLH" evidence="4">
    <location>
        <begin position="1"/>
        <end position="53"/>
    </location>
</feature>
<feature type="domain" description="PAS 1" evidence="3">
    <location>
        <begin position="70"/>
        <end position="144"/>
    </location>
</feature>
<feature type="domain" description="PAS 2" evidence="3">
    <location>
        <begin position="203"/>
        <end position="275"/>
    </location>
</feature>
<feature type="domain" description="PAC">
    <location>
        <begin position="280"/>
        <end position="319"/>
    </location>
</feature>
<feature type="region of interest" description="Basic motif; degenerate" evidence="4">
    <location>
        <begin position="1"/>
        <end position="13"/>
    </location>
</feature>
<feature type="region of interest" description="Helix-loop-helix motif" evidence="4">
    <location>
        <begin position="14"/>
        <end position="53"/>
    </location>
</feature>
<feature type="region of interest" description="Disordered" evidence="5">
    <location>
        <begin position="472"/>
        <end position="555"/>
    </location>
</feature>
<feature type="coiled-coil region" evidence="2">
    <location>
        <begin position="5"/>
        <end position="38"/>
    </location>
</feature>
<feature type="coiled-coil region" evidence="2">
    <location>
        <begin position="624"/>
        <end position="648"/>
    </location>
</feature>
<feature type="compositionally biased region" description="Polar residues" evidence="5">
    <location>
        <begin position="472"/>
        <end position="495"/>
    </location>
</feature>
<feature type="compositionally biased region" description="Polar residues" evidence="5">
    <location>
        <begin position="502"/>
        <end position="518"/>
    </location>
</feature>
<feature type="compositionally biased region" description="Polar residues" evidence="5">
    <location>
        <begin position="527"/>
        <end position="555"/>
    </location>
</feature>
<dbReference type="EMBL" id="AB050103">
    <property type="protein sequence ID" value="BAC19832.1"/>
    <property type="molecule type" value="mRNA"/>
</dbReference>
<dbReference type="RefSeq" id="NP_705890.1">
    <property type="nucleotide sequence ID" value="NM_153626.1"/>
</dbReference>
<dbReference type="RefSeq" id="XP_017444330.1">
    <property type="nucleotide sequence ID" value="XM_017588841.1"/>
</dbReference>
<dbReference type="RefSeq" id="XP_038958429.1">
    <property type="nucleotide sequence ID" value="XM_039102501.2"/>
</dbReference>
<dbReference type="SMR" id="Q8CJH6"/>
<dbReference type="FunCoup" id="Q8CJH6">
    <property type="interactions" value="45"/>
</dbReference>
<dbReference type="STRING" id="10116.ENSRNOP00000027119"/>
<dbReference type="PhosphoSitePlus" id="Q8CJH6"/>
<dbReference type="PaxDb" id="10116-ENSRNOP00000027119"/>
<dbReference type="ABCD" id="Q8CJH6">
    <property type="antibodies" value="3 sequenced antibodies"/>
</dbReference>
<dbReference type="Ensembl" id="ENSRNOT00000027119.3">
    <property type="protein sequence ID" value="ENSRNOP00000027119.2"/>
    <property type="gene ID" value="ENSRNOG00000020009.3"/>
</dbReference>
<dbReference type="GeneID" id="266734"/>
<dbReference type="KEGG" id="rno:266734"/>
<dbReference type="UCSC" id="RGD:628866">
    <property type="organism name" value="rat"/>
</dbReference>
<dbReference type="AGR" id="RGD:628866"/>
<dbReference type="CTD" id="266743"/>
<dbReference type="RGD" id="628866">
    <property type="gene designation" value="Npas4"/>
</dbReference>
<dbReference type="eggNOG" id="ENOG502QRXX">
    <property type="taxonomic scope" value="Eukaryota"/>
</dbReference>
<dbReference type="GeneTree" id="ENSGT00530000064165"/>
<dbReference type="HOGENOM" id="CLU_013890_0_0_1"/>
<dbReference type="InParanoid" id="Q8CJH6"/>
<dbReference type="OMA" id="TKTYFTQ"/>
<dbReference type="OrthoDB" id="9978016at2759"/>
<dbReference type="PhylomeDB" id="Q8CJH6"/>
<dbReference type="TreeFam" id="TF319684"/>
<dbReference type="Reactome" id="R-RNO-9768919">
    <property type="pathway name" value="NPAS4 regulates expression of target genes"/>
</dbReference>
<dbReference type="PRO" id="PR:Q8CJH6"/>
<dbReference type="Proteomes" id="UP000002494">
    <property type="component" value="Chromosome 1"/>
</dbReference>
<dbReference type="Bgee" id="ENSRNOG00000020009">
    <property type="expression patterns" value="Expressed in frontal cortex and 6 other cell types or tissues"/>
</dbReference>
<dbReference type="GO" id="GO:0005829">
    <property type="term" value="C:cytosol"/>
    <property type="evidence" value="ECO:0000304"/>
    <property type="project" value="Reactome"/>
</dbReference>
<dbReference type="GO" id="GO:0005654">
    <property type="term" value="C:nucleoplasm"/>
    <property type="evidence" value="ECO:0000304"/>
    <property type="project" value="Reactome"/>
</dbReference>
<dbReference type="GO" id="GO:0005634">
    <property type="term" value="C:nucleus"/>
    <property type="evidence" value="ECO:0000266"/>
    <property type="project" value="RGD"/>
</dbReference>
<dbReference type="GO" id="GO:0098794">
    <property type="term" value="C:postsynapse"/>
    <property type="evidence" value="ECO:0007669"/>
    <property type="project" value="GOC"/>
</dbReference>
<dbReference type="GO" id="GO:0005667">
    <property type="term" value="C:transcription regulator complex"/>
    <property type="evidence" value="ECO:0000266"/>
    <property type="project" value="RGD"/>
</dbReference>
<dbReference type="GO" id="GO:0001228">
    <property type="term" value="F:DNA-binding transcription activator activity, RNA polymerase II-specific"/>
    <property type="evidence" value="ECO:0000266"/>
    <property type="project" value="RGD"/>
</dbReference>
<dbReference type="GO" id="GO:0000981">
    <property type="term" value="F:DNA-binding transcription factor activity, RNA polymerase II-specific"/>
    <property type="evidence" value="ECO:0000250"/>
    <property type="project" value="UniProtKB"/>
</dbReference>
<dbReference type="GO" id="GO:0046982">
    <property type="term" value="F:protein heterodimerization activity"/>
    <property type="evidence" value="ECO:0000266"/>
    <property type="project" value="RGD"/>
</dbReference>
<dbReference type="GO" id="GO:0044877">
    <property type="term" value="F:protein-containing complex binding"/>
    <property type="evidence" value="ECO:0000314"/>
    <property type="project" value="RGD"/>
</dbReference>
<dbReference type="GO" id="GO:0000978">
    <property type="term" value="F:RNA polymerase II cis-regulatory region sequence-specific DNA binding"/>
    <property type="evidence" value="ECO:0000250"/>
    <property type="project" value="UniProtKB"/>
</dbReference>
<dbReference type="GO" id="GO:0000977">
    <property type="term" value="F:RNA polymerase II transcription regulatory region sequence-specific DNA binding"/>
    <property type="evidence" value="ECO:0000266"/>
    <property type="project" value="RGD"/>
</dbReference>
<dbReference type="GO" id="GO:0030154">
    <property type="term" value="P:cell differentiation"/>
    <property type="evidence" value="ECO:0007669"/>
    <property type="project" value="UniProtKB-KW"/>
</dbReference>
<dbReference type="GO" id="GO:0071386">
    <property type="term" value="P:cellular response to corticosterone stimulus"/>
    <property type="evidence" value="ECO:0000266"/>
    <property type="project" value="RGD"/>
</dbReference>
<dbReference type="GO" id="GO:0033554">
    <property type="term" value="P:cellular response to stress"/>
    <property type="evidence" value="ECO:0000266"/>
    <property type="project" value="RGD"/>
</dbReference>
<dbReference type="GO" id="GO:0060079">
    <property type="term" value="P:excitatory postsynaptic potential"/>
    <property type="evidence" value="ECO:0000250"/>
    <property type="project" value="UniProtKB"/>
</dbReference>
<dbReference type="GO" id="GO:0060080">
    <property type="term" value="P:inhibitory postsynaptic potential"/>
    <property type="evidence" value="ECO:0000250"/>
    <property type="project" value="UniProtKB"/>
</dbReference>
<dbReference type="GO" id="GO:1904862">
    <property type="term" value="P:inhibitory synapse assembly"/>
    <property type="evidence" value="ECO:0000250"/>
    <property type="project" value="UniProtKB"/>
</dbReference>
<dbReference type="GO" id="GO:0007612">
    <property type="term" value="P:learning"/>
    <property type="evidence" value="ECO:0000250"/>
    <property type="project" value="UniProtKB"/>
</dbReference>
<dbReference type="GO" id="GO:0007616">
    <property type="term" value="P:long-term memory"/>
    <property type="evidence" value="ECO:0000250"/>
    <property type="project" value="UniProtKB"/>
</dbReference>
<dbReference type="GO" id="GO:0045893">
    <property type="term" value="P:positive regulation of DNA-templated transcription"/>
    <property type="evidence" value="ECO:0000250"/>
    <property type="project" value="UniProtKB"/>
</dbReference>
<dbReference type="GO" id="GO:0045944">
    <property type="term" value="P:positive regulation of transcription by RNA polymerase II"/>
    <property type="evidence" value="ECO:0000250"/>
    <property type="project" value="UniProtKB"/>
</dbReference>
<dbReference type="GO" id="GO:0048167">
    <property type="term" value="P:regulation of synaptic plasticity"/>
    <property type="evidence" value="ECO:0000250"/>
    <property type="project" value="UniProtKB"/>
</dbReference>
<dbReference type="GO" id="GO:0032228">
    <property type="term" value="P:regulation of synaptic transmission, GABAergic"/>
    <property type="evidence" value="ECO:0000250"/>
    <property type="project" value="UniProtKB"/>
</dbReference>
<dbReference type="GO" id="GO:0006357">
    <property type="term" value="P:regulation of transcription by RNA polymerase II"/>
    <property type="evidence" value="ECO:0000318"/>
    <property type="project" value="GO_Central"/>
</dbReference>
<dbReference type="GO" id="GO:0007614">
    <property type="term" value="P:short-term memory"/>
    <property type="evidence" value="ECO:0000250"/>
    <property type="project" value="UniProtKB"/>
</dbReference>
<dbReference type="GO" id="GO:0035176">
    <property type="term" value="P:social behavior"/>
    <property type="evidence" value="ECO:0000250"/>
    <property type="project" value="UniProtKB"/>
</dbReference>
<dbReference type="CDD" id="cd19697">
    <property type="entry name" value="bHLH-PAS_NPAS4_PASD10"/>
    <property type="match status" value="1"/>
</dbReference>
<dbReference type="CDD" id="cd00130">
    <property type="entry name" value="PAS"/>
    <property type="match status" value="2"/>
</dbReference>
<dbReference type="FunFam" id="3.30.450.20:FF:000055">
    <property type="entry name" value="neuronal PAS domain-containing protein 4"/>
    <property type="match status" value="1"/>
</dbReference>
<dbReference type="FunFam" id="3.30.450.20:FF:000058">
    <property type="entry name" value="neuronal PAS domain-containing protein 4"/>
    <property type="match status" value="1"/>
</dbReference>
<dbReference type="Gene3D" id="3.30.450.20">
    <property type="entry name" value="PAS domain"/>
    <property type="match status" value="2"/>
</dbReference>
<dbReference type="InterPro" id="IPR011598">
    <property type="entry name" value="bHLH_dom"/>
</dbReference>
<dbReference type="InterPro" id="IPR056192">
    <property type="entry name" value="bHLH_NPAS4"/>
</dbReference>
<dbReference type="InterPro" id="IPR000014">
    <property type="entry name" value="PAS"/>
</dbReference>
<dbReference type="InterPro" id="IPR035965">
    <property type="entry name" value="PAS-like_dom_sf"/>
</dbReference>
<dbReference type="InterPro" id="IPR013655">
    <property type="entry name" value="PAS_fold_3"/>
</dbReference>
<dbReference type="PANTHER" id="PTHR23043">
    <property type="entry name" value="HYPOXIA-INDUCIBLE FACTOR 1 ALPHA"/>
    <property type="match status" value="1"/>
</dbReference>
<dbReference type="PANTHER" id="PTHR23043:SF24">
    <property type="entry name" value="NEURONAL PAS DOMAIN-CONTAINING PROTEIN 4"/>
    <property type="match status" value="1"/>
</dbReference>
<dbReference type="Pfam" id="PF23183">
    <property type="entry name" value="bHLH_NPAS4"/>
    <property type="match status" value="1"/>
</dbReference>
<dbReference type="Pfam" id="PF08447">
    <property type="entry name" value="PAS_3"/>
    <property type="match status" value="1"/>
</dbReference>
<dbReference type="SMART" id="SM00091">
    <property type="entry name" value="PAS"/>
    <property type="match status" value="2"/>
</dbReference>
<dbReference type="SUPFAM" id="SSF55785">
    <property type="entry name" value="PYP-like sensor domain (PAS domain)"/>
    <property type="match status" value="2"/>
</dbReference>
<dbReference type="PROSITE" id="PS50888">
    <property type="entry name" value="BHLH"/>
    <property type="match status" value="1"/>
</dbReference>
<dbReference type="PROSITE" id="PS50112">
    <property type="entry name" value="PAS"/>
    <property type="match status" value="2"/>
</dbReference>